<feature type="chain" id="PRO_0000337328" description="Elongation factor Tu">
    <location>
        <begin position="1"/>
        <end position="396"/>
    </location>
</feature>
<feature type="domain" description="tr-type G">
    <location>
        <begin position="10"/>
        <end position="206"/>
    </location>
</feature>
<feature type="region of interest" description="G1" evidence="1">
    <location>
        <begin position="19"/>
        <end position="26"/>
    </location>
</feature>
<feature type="region of interest" description="G2" evidence="1">
    <location>
        <begin position="60"/>
        <end position="64"/>
    </location>
</feature>
<feature type="region of interest" description="G3" evidence="1">
    <location>
        <begin position="81"/>
        <end position="84"/>
    </location>
</feature>
<feature type="region of interest" description="G4" evidence="1">
    <location>
        <begin position="136"/>
        <end position="139"/>
    </location>
</feature>
<feature type="region of interest" description="G5" evidence="1">
    <location>
        <begin position="174"/>
        <end position="176"/>
    </location>
</feature>
<feature type="binding site" evidence="2">
    <location>
        <begin position="19"/>
        <end position="26"/>
    </location>
    <ligand>
        <name>GTP</name>
        <dbReference type="ChEBI" id="CHEBI:37565"/>
    </ligand>
</feature>
<feature type="binding site" evidence="2">
    <location>
        <position position="26"/>
    </location>
    <ligand>
        <name>Mg(2+)</name>
        <dbReference type="ChEBI" id="CHEBI:18420"/>
    </ligand>
</feature>
<feature type="binding site" evidence="2">
    <location>
        <begin position="81"/>
        <end position="85"/>
    </location>
    <ligand>
        <name>GTP</name>
        <dbReference type="ChEBI" id="CHEBI:37565"/>
    </ligand>
</feature>
<feature type="binding site" evidence="2">
    <location>
        <begin position="136"/>
        <end position="139"/>
    </location>
    <ligand>
        <name>GTP</name>
        <dbReference type="ChEBI" id="CHEBI:37565"/>
    </ligand>
</feature>
<proteinExistence type="inferred from homology"/>
<evidence type="ECO:0000250" key="1"/>
<evidence type="ECO:0000255" key="2">
    <source>
        <dbReference type="HAMAP-Rule" id="MF_00118"/>
    </source>
</evidence>
<comment type="function">
    <text evidence="2">GTP hydrolase that promotes the GTP-dependent binding of aminoacyl-tRNA to the A-site of ribosomes during protein biosynthesis.</text>
</comment>
<comment type="catalytic activity">
    <reaction evidence="2">
        <text>GTP + H2O = GDP + phosphate + H(+)</text>
        <dbReference type="Rhea" id="RHEA:19669"/>
        <dbReference type="ChEBI" id="CHEBI:15377"/>
        <dbReference type="ChEBI" id="CHEBI:15378"/>
        <dbReference type="ChEBI" id="CHEBI:37565"/>
        <dbReference type="ChEBI" id="CHEBI:43474"/>
        <dbReference type="ChEBI" id="CHEBI:58189"/>
        <dbReference type="EC" id="3.6.5.3"/>
    </reaction>
    <physiologicalReaction direction="left-to-right" evidence="2">
        <dbReference type="Rhea" id="RHEA:19670"/>
    </physiologicalReaction>
</comment>
<comment type="subunit">
    <text evidence="2">Monomer.</text>
</comment>
<comment type="subcellular location">
    <subcellularLocation>
        <location evidence="2">Cytoplasm</location>
    </subcellularLocation>
</comment>
<comment type="similarity">
    <text evidence="2">Belongs to the TRAFAC class translation factor GTPase superfamily. Classic translation factor GTPase family. EF-Tu/EF-1A subfamily.</text>
</comment>
<dbReference type="EC" id="3.6.5.3" evidence="2"/>
<dbReference type="EMBL" id="BX640423">
    <property type="protein sequence ID" value="CAE39748.1"/>
    <property type="molecule type" value="Genomic_DNA"/>
</dbReference>
<dbReference type="EMBL" id="BX640423">
    <property type="protein sequence ID" value="CAE39768.1"/>
    <property type="molecule type" value="Genomic_DNA"/>
</dbReference>
<dbReference type="RefSeq" id="WP_003806883.1">
    <property type="nucleotide sequence ID" value="NC_002928.3"/>
</dbReference>
<dbReference type="SMR" id="Q79GC6"/>
<dbReference type="GeneID" id="69600161"/>
<dbReference type="KEGG" id="bpa:BPP0007"/>
<dbReference type="KEGG" id="bpa:BPP0027"/>
<dbReference type="HOGENOM" id="CLU_007265_0_0_4"/>
<dbReference type="Proteomes" id="UP000001421">
    <property type="component" value="Chromosome"/>
</dbReference>
<dbReference type="GO" id="GO:0005829">
    <property type="term" value="C:cytosol"/>
    <property type="evidence" value="ECO:0007669"/>
    <property type="project" value="TreeGrafter"/>
</dbReference>
<dbReference type="GO" id="GO:0005525">
    <property type="term" value="F:GTP binding"/>
    <property type="evidence" value="ECO:0007669"/>
    <property type="project" value="UniProtKB-UniRule"/>
</dbReference>
<dbReference type="GO" id="GO:0003924">
    <property type="term" value="F:GTPase activity"/>
    <property type="evidence" value="ECO:0007669"/>
    <property type="project" value="InterPro"/>
</dbReference>
<dbReference type="GO" id="GO:0097216">
    <property type="term" value="F:guanosine tetraphosphate binding"/>
    <property type="evidence" value="ECO:0007669"/>
    <property type="project" value="UniProtKB-ARBA"/>
</dbReference>
<dbReference type="GO" id="GO:0003746">
    <property type="term" value="F:translation elongation factor activity"/>
    <property type="evidence" value="ECO:0007669"/>
    <property type="project" value="UniProtKB-UniRule"/>
</dbReference>
<dbReference type="CDD" id="cd01884">
    <property type="entry name" value="EF_Tu"/>
    <property type="match status" value="1"/>
</dbReference>
<dbReference type="CDD" id="cd03697">
    <property type="entry name" value="EFTU_II"/>
    <property type="match status" value="1"/>
</dbReference>
<dbReference type="CDD" id="cd03707">
    <property type="entry name" value="EFTU_III"/>
    <property type="match status" value="1"/>
</dbReference>
<dbReference type="FunFam" id="2.40.30.10:FF:000001">
    <property type="entry name" value="Elongation factor Tu"/>
    <property type="match status" value="1"/>
</dbReference>
<dbReference type="FunFam" id="3.40.50.300:FF:000003">
    <property type="entry name" value="Elongation factor Tu"/>
    <property type="match status" value="1"/>
</dbReference>
<dbReference type="Gene3D" id="3.40.50.300">
    <property type="entry name" value="P-loop containing nucleotide triphosphate hydrolases"/>
    <property type="match status" value="1"/>
</dbReference>
<dbReference type="Gene3D" id="2.40.30.10">
    <property type="entry name" value="Translation factors"/>
    <property type="match status" value="2"/>
</dbReference>
<dbReference type="HAMAP" id="MF_00118_B">
    <property type="entry name" value="EF_Tu_B"/>
    <property type="match status" value="1"/>
</dbReference>
<dbReference type="InterPro" id="IPR041709">
    <property type="entry name" value="EF-Tu_GTP-bd"/>
</dbReference>
<dbReference type="InterPro" id="IPR050055">
    <property type="entry name" value="EF-Tu_GTPase"/>
</dbReference>
<dbReference type="InterPro" id="IPR004161">
    <property type="entry name" value="EFTu-like_2"/>
</dbReference>
<dbReference type="InterPro" id="IPR033720">
    <property type="entry name" value="EFTU_2"/>
</dbReference>
<dbReference type="InterPro" id="IPR031157">
    <property type="entry name" value="G_TR_CS"/>
</dbReference>
<dbReference type="InterPro" id="IPR027417">
    <property type="entry name" value="P-loop_NTPase"/>
</dbReference>
<dbReference type="InterPro" id="IPR005225">
    <property type="entry name" value="Small_GTP-bd"/>
</dbReference>
<dbReference type="InterPro" id="IPR000795">
    <property type="entry name" value="T_Tr_GTP-bd_dom"/>
</dbReference>
<dbReference type="InterPro" id="IPR009000">
    <property type="entry name" value="Transl_B-barrel_sf"/>
</dbReference>
<dbReference type="InterPro" id="IPR009001">
    <property type="entry name" value="Transl_elong_EF1A/Init_IF2_C"/>
</dbReference>
<dbReference type="InterPro" id="IPR004541">
    <property type="entry name" value="Transl_elong_EFTu/EF1A_bac/org"/>
</dbReference>
<dbReference type="InterPro" id="IPR004160">
    <property type="entry name" value="Transl_elong_EFTu/EF1A_C"/>
</dbReference>
<dbReference type="NCBIfam" id="TIGR00485">
    <property type="entry name" value="EF-Tu"/>
    <property type="match status" value="1"/>
</dbReference>
<dbReference type="NCBIfam" id="NF000766">
    <property type="entry name" value="PRK00049.1"/>
    <property type="match status" value="1"/>
</dbReference>
<dbReference type="NCBIfam" id="NF009372">
    <property type="entry name" value="PRK12735.1"/>
    <property type="match status" value="1"/>
</dbReference>
<dbReference type="NCBIfam" id="NF009373">
    <property type="entry name" value="PRK12736.1"/>
    <property type="match status" value="1"/>
</dbReference>
<dbReference type="NCBIfam" id="TIGR00231">
    <property type="entry name" value="small_GTP"/>
    <property type="match status" value="1"/>
</dbReference>
<dbReference type="PANTHER" id="PTHR43721:SF22">
    <property type="entry name" value="ELONGATION FACTOR TU, MITOCHONDRIAL"/>
    <property type="match status" value="1"/>
</dbReference>
<dbReference type="PANTHER" id="PTHR43721">
    <property type="entry name" value="ELONGATION FACTOR TU-RELATED"/>
    <property type="match status" value="1"/>
</dbReference>
<dbReference type="Pfam" id="PF00009">
    <property type="entry name" value="GTP_EFTU"/>
    <property type="match status" value="1"/>
</dbReference>
<dbReference type="Pfam" id="PF03144">
    <property type="entry name" value="GTP_EFTU_D2"/>
    <property type="match status" value="1"/>
</dbReference>
<dbReference type="Pfam" id="PF03143">
    <property type="entry name" value="GTP_EFTU_D3"/>
    <property type="match status" value="1"/>
</dbReference>
<dbReference type="PRINTS" id="PR00315">
    <property type="entry name" value="ELONGATNFCT"/>
</dbReference>
<dbReference type="SUPFAM" id="SSF50465">
    <property type="entry name" value="EF-Tu/eEF-1alpha/eIF2-gamma C-terminal domain"/>
    <property type="match status" value="1"/>
</dbReference>
<dbReference type="SUPFAM" id="SSF52540">
    <property type="entry name" value="P-loop containing nucleoside triphosphate hydrolases"/>
    <property type="match status" value="1"/>
</dbReference>
<dbReference type="SUPFAM" id="SSF50447">
    <property type="entry name" value="Translation proteins"/>
    <property type="match status" value="1"/>
</dbReference>
<dbReference type="PROSITE" id="PS00301">
    <property type="entry name" value="G_TR_1"/>
    <property type="match status" value="1"/>
</dbReference>
<dbReference type="PROSITE" id="PS51722">
    <property type="entry name" value="G_TR_2"/>
    <property type="match status" value="1"/>
</dbReference>
<gene>
    <name evidence="2" type="primary">tuf1</name>
    <name type="ordered locus">BPP0007</name>
</gene>
<gene>
    <name evidence="2" type="primary">tuf2</name>
    <name type="ordered locus">BPP0027</name>
</gene>
<reference key="1">
    <citation type="journal article" date="2003" name="Nat. Genet.">
        <title>Comparative analysis of the genome sequences of Bordetella pertussis, Bordetella parapertussis and Bordetella bronchiseptica.</title>
        <authorList>
            <person name="Parkhill J."/>
            <person name="Sebaihia M."/>
            <person name="Preston A."/>
            <person name="Murphy L.D."/>
            <person name="Thomson N.R."/>
            <person name="Harris D.E."/>
            <person name="Holden M.T.G."/>
            <person name="Churcher C.M."/>
            <person name="Bentley S.D."/>
            <person name="Mungall K.L."/>
            <person name="Cerdeno-Tarraga A.-M."/>
            <person name="Temple L."/>
            <person name="James K.D."/>
            <person name="Harris B."/>
            <person name="Quail M.A."/>
            <person name="Achtman M."/>
            <person name="Atkin R."/>
            <person name="Baker S."/>
            <person name="Basham D."/>
            <person name="Bason N."/>
            <person name="Cherevach I."/>
            <person name="Chillingworth T."/>
            <person name="Collins M."/>
            <person name="Cronin A."/>
            <person name="Davis P."/>
            <person name="Doggett J."/>
            <person name="Feltwell T."/>
            <person name="Goble A."/>
            <person name="Hamlin N."/>
            <person name="Hauser H."/>
            <person name="Holroyd S."/>
            <person name="Jagels K."/>
            <person name="Leather S."/>
            <person name="Moule S."/>
            <person name="Norberczak H."/>
            <person name="O'Neil S."/>
            <person name="Ormond D."/>
            <person name="Price C."/>
            <person name="Rabbinowitsch E."/>
            <person name="Rutter S."/>
            <person name="Sanders M."/>
            <person name="Saunders D."/>
            <person name="Seeger K."/>
            <person name="Sharp S."/>
            <person name="Simmonds M."/>
            <person name="Skelton J."/>
            <person name="Squares R."/>
            <person name="Squares S."/>
            <person name="Stevens K."/>
            <person name="Unwin L."/>
            <person name="Whitehead S."/>
            <person name="Barrell B.G."/>
            <person name="Maskell D.J."/>
        </authorList>
    </citation>
    <scope>NUCLEOTIDE SEQUENCE [LARGE SCALE GENOMIC DNA]</scope>
    <source>
        <strain>12822 / ATCC BAA-587 / NCTC 13253</strain>
    </source>
</reference>
<sequence length="396" mass="42916">MAKGKFERTKPHVNVGTIGHVDHGKTTLTAAITTVLSNKFGGEARGYDQIDAAPEEKARGITINTSHVEYETETRHYAHVDCPGHADYVKNMITGAAQMDGAILVVSAADGPMPQTREHILLSRQVGVPYIIVFLNKADMVDDAELLELVEMEVRELLSKYDFPGDDTPIVKGSAKLALEGDKGELGEQAILSLAQALDTYIPTPERAVDGAFLMPVEDVFSISGRGTVVTGRIERGVVKVGEEIEIVGIKPTVKTTCTGVEMFRKLLDQGQAGDNVGILLRGTKREDVERGQVLAKPGSINPHTDFTAEVYILSKEEGGRHTPFFNGYRPQFYFRTTDVTGTIDLPADKEMVLPGDNVSMTVKLLAPIAMEEGLRFAIREGGRTVGAGVVAKIIK</sequence>
<protein>
    <recommendedName>
        <fullName evidence="2">Elongation factor Tu</fullName>
        <shortName evidence="2">EF-Tu</shortName>
        <ecNumber evidence="2">3.6.5.3</ecNumber>
    </recommendedName>
</protein>
<keyword id="KW-0963">Cytoplasm</keyword>
<keyword id="KW-0251">Elongation factor</keyword>
<keyword id="KW-0342">GTP-binding</keyword>
<keyword id="KW-0378">Hydrolase</keyword>
<keyword id="KW-0460">Magnesium</keyword>
<keyword id="KW-0479">Metal-binding</keyword>
<keyword id="KW-0547">Nucleotide-binding</keyword>
<keyword id="KW-0648">Protein biosynthesis</keyword>
<name>EFTU_BORPA</name>
<organism>
    <name type="scientific">Bordetella parapertussis (strain 12822 / ATCC BAA-587 / NCTC 13253)</name>
    <dbReference type="NCBI Taxonomy" id="257311"/>
    <lineage>
        <taxon>Bacteria</taxon>
        <taxon>Pseudomonadati</taxon>
        <taxon>Pseudomonadota</taxon>
        <taxon>Betaproteobacteria</taxon>
        <taxon>Burkholderiales</taxon>
        <taxon>Alcaligenaceae</taxon>
        <taxon>Bordetella</taxon>
    </lineage>
</organism>
<accession>Q79GC6</accession>
<accession>Q7TT92</accession>